<name>C1GLT_HUMAN</name>
<protein>
    <recommendedName>
        <fullName>Glycoprotein-N-acetylgalactosamine 3-beta-galactosyltransferase 1</fullName>
        <ecNumber evidence="6">2.4.1.122</ecNumber>
    </recommendedName>
    <alternativeName>
        <fullName>B3Gal-T8</fullName>
    </alternativeName>
    <alternativeName>
        <fullName>Core 1 O-glycan T-synthase</fullName>
    </alternativeName>
    <alternativeName>
        <fullName>Core 1 UDP-galactose:N-acetylgalactosamine-alpha-R beta 1,3-galactosyltransferase 1</fullName>
        <shortName>Beta-1,3-galactosyltransferase</shortName>
    </alternativeName>
    <alternativeName>
        <fullName>Core 1 beta1,3-galactosyltransferase 1</fullName>
        <shortName>C1GalT1</shortName>
        <shortName>Core 1 beta3-Gal-T1</shortName>
    </alternativeName>
</protein>
<reference key="1">
    <citation type="journal article" date="2002" name="J. Biol. Chem.">
        <title>Cloning and expression of human core 1 beta1,3-galactosyltransferase.</title>
        <authorList>
            <person name="Ju T."/>
            <person name="Brewer K."/>
            <person name="D'Souza A."/>
            <person name="Cummings R.D."/>
            <person name="Canfield W.M."/>
        </authorList>
    </citation>
    <scope>NUCLEOTIDE SEQUENCE [MRNA] (ISOFORM 1)</scope>
    <scope>FUNCTION</scope>
    <scope>CATALYTIC ACTIVITY</scope>
    <scope>PATHWAY</scope>
    <scope>TISSUE SPECIFICITY</scope>
</reference>
<reference key="2">
    <citation type="submission" date="1999-06" db="EMBL/GenBank/DDBJ databases">
        <title>Cloning and expression of a novel beta-1,3-galactosyltransferase.</title>
        <authorList>
            <person name="Jensen M.P.A."/>
        </authorList>
    </citation>
    <scope>NUCLEOTIDE SEQUENCE [MRNA] (ISOFORMS 1 AND 2)</scope>
</reference>
<reference key="3">
    <citation type="journal article" date="2003" name="Nature">
        <title>The DNA sequence of human chromosome 7.</title>
        <authorList>
            <person name="Hillier L.W."/>
            <person name="Fulton R.S."/>
            <person name="Fulton L.A."/>
            <person name="Graves T.A."/>
            <person name="Pepin K.H."/>
            <person name="Wagner-McPherson C."/>
            <person name="Layman D."/>
            <person name="Maas J."/>
            <person name="Jaeger S."/>
            <person name="Walker R."/>
            <person name="Wylie K."/>
            <person name="Sekhon M."/>
            <person name="Becker M.C."/>
            <person name="O'Laughlin M.D."/>
            <person name="Schaller M.E."/>
            <person name="Fewell G.A."/>
            <person name="Delehaunty K.D."/>
            <person name="Miner T.L."/>
            <person name="Nash W.E."/>
            <person name="Cordes M."/>
            <person name="Du H."/>
            <person name="Sun H."/>
            <person name="Edwards J."/>
            <person name="Bradshaw-Cordum H."/>
            <person name="Ali J."/>
            <person name="Andrews S."/>
            <person name="Isak A."/>
            <person name="Vanbrunt A."/>
            <person name="Nguyen C."/>
            <person name="Du F."/>
            <person name="Lamar B."/>
            <person name="Courtney L."/>
            <person name="Kalicki J."/>
            <person name="Ozersky P."/>
            <person name="Bielicki L."/>
            <person name="Scott K."/>
            <person name="Holmes A."/>
            <person name="Harkins R."/>
            <person name="Harris A."/>
            <person name="Strong C.M."/>
            <person name="Hou S."/>
            <person name="Tomlinson C."/>
            <person name="Dauphin-Kohlberg S."/>
            <person name="Kozlowicz-Reilly A."/>
            <person name="Leonard S."/>
            <person name="Rohlfing T."/>
            <person name="Rock S.M."/>
            <person name="Tin-Wollam A.-M."/>
            <person name="Abbott A."/>
            <person name="Minx P."/>
            <person name="Maupin R."/>
            <person name="Strowmatt C."/>
            <person name="Latreille P."/>
            <person name="Miller N."/>
            <person name="Johnson D."/>
            <person name="Murray J."/>
            <person name="Woessner J.P."/>
            <person name="Wendl M.C."/>
            <person name="Yang S.-P."/>
            <person name="Schultz B.R."/>
            <person name="Wallis J.W."/>
            <person name="Spieth J."/>
            <person name="Bieri T.A."/>
            <person name="Nelson J.O."/>
            <person name="Berkowicz N."/>
            <person name="Wohldmann P.E."/>
            <person name="Cook L.L."/>
            <person name="Hickenbotham M.T."/>
            <person name="Eldred J."/>
            <person name="Williams D."/>
            <person name="Bedell J.A."/>
            <person name="Mardis E.R."/>
            <person name="Clifton S.W."/>
            <person name="Chissoe S.L."/>
            <person name="Marra M.A."/>
            <person name="Raymond C."/>
            <person name="Haugen E."/>
            <person name="Gillett W."/>
            <person name="Zhou Y."/>
            <person name="James R."/>
            <person name="Phelps K."/>
            <person name="Iadanoto S."/>
            <person name="Bubb K."/>
            <person name="Simms E."/>
            <person name="Levy R."/>
            <person name="Clendenning J."/>
            <person name="Kaul R."/>
            <person name="Kent W.J."/>
            <person name="Furey T.S."/>
            <person name="Baertsch R.A."/>
            <person name="Brent M.R."/>
            <person name="Keibler E."/>
            <person name="Flicek P."/>
            <person name="Bork P."/>
            <person name="Suyama M."/>
            <person name="Bailey J.A."/>
            <person name="Portnoy M.E."/>
            <person name="Torrents D."/>
            <person name="Chinwalla A.T."/>
            <person name="Gish W.R."/>
            <person name="Eddy S.R."/>
            <person name="McPherson J.D."/>
            <person name="Olson M.V."/>
            <person name="Eichler E.E."/>
            <person name="Green E.D."/>
            <person name="Waterston R.H."/>
            <person name="Wilson R.K."/>
        </authorList>
    </citation>
    <scope>NUCLEOTIDE SEQUENCE [LARGE SCALE GENOMIC DNA]</scope>
</reference>
<reference key="4">
    <citation type="journal article" date="2003" name="Science">
        <title>Human chromosome 7: DNA sequence and biology.</title>
        <authorList>
            <person name="Scherer S.W."/>
            <person name="Cheung J."/>
            <person name="MacDonald J.R."/>
            <person name="Osborne L.R."/>
            <person name="Nakabayashi K."/>
            <person name="Herbrick J.-A."/>
            <person name="Carson A.R."/>
            <person name="Parker-Katiraee L."/>
            <person name="Skaug J."/>
            <person name="Khaja R."/>
            <person name="Zhang J."/>
            <person name="Hudek A.K."/>
            <person name="Li M."/>
            <person name="Haddad M."/>
            <person name="Duggan G.E."/>
            <person name="Fernandez B.A."/>
            <person name="Kanematsu E."/>
            <person name="Gentles S."/>
            <person name="Christopoulos C.C."/>
            <person name="Choufani S."/>
            <person name="Kwasnicka D."/>
            <person name="Zheng X.H."/>
            <person name="Lai Z."/>
            <person name="Nusskern D.R."/>
            <person name="Zhang Q."/>
            <person name="Gu Z."/>
            <person name="Lu F."/>
            <person name="Zeesman S."/>
            <person name="Nowaczyk M.J."/>
            <person name="Teshima I."/>
            <person name="Chitayat D."/>
            <person name="Shuman C."/>
            <person name="Weksberg R."/>
            <person name="Zackai E.H."/>
            <person name="Grebe T.A."/>
            <person name="Cox S.R."/>
            <person name="Kirkpatrick S.J."/>
            <person name="Rahman N."/>
            <person name="Friedman J.M."/>
            <person name="Heng H.H.Q."/>
            <person name="Pelicci P.G."/>
            <person name="Lo-Coco F."/>
            <person name="Belloni E."/>
            <person name="Shaffer L.G."/>
            <person name="Pober B."/>
            <person name="Morton C.C."/>
            <person name="Gusella J.F."/>
            <person name="Bruns G.A.P."/>
            <person name="Korf B.R."/>
            <person name="Quade B.J."/>
            <person name="Ligon A.H."/>
            <person name="Ferguson H."/>
            <person name="Higgins A.W."/>
            <person name="Leach N.T."/>
            <person name="Herrick S.R."/>
            <person name="Lemyre E."/>
            <person name="Farra C.G."/>
            <person name="Kim H.-G."/>
            <person name="Summers A.M."/>
            <person name="Gripp K.W."/>
            <person name="Roberts W."/>
            <person name="Szatmari P."/>
            <person name="Winsor E.J.T."/>
            <person name="Grzeschik K.-H."/>
            <person name="Teebi A."/>
            <person name="Minassian B.A."/>
            <person name="Kere J."/>
            <person name="Armengol L."/>
            <person name="Pujana M.A."/>
            <person name="Estivill X."/>
            <person name="Wilson M.D."/>
            <person name="Koop B.F."/>
            <person name="Tosi S."/>
            <person name="Moore G.E."/>
            <person name="Boright A.P."/>
            <person name="Zlotorynski E."/>
            <person name="Kerem B."/>
            <person name="Kroisel P.M."/>
            <person name="Petek E."/>
            <person name="Oscier D.G."/>
            <person name="Mould S.J."/>
            <person name="Doehner H."/>
            <person name="Doehner K."/>
            <person name="Rommens J.M."/>
            <person name="Vincent J.B."/>
            <person name="Venter J.C."/>
            <person name="Li P.W."/>
            <person name="Mural R.J."/>
            <person name="Adams M.D."/>
            <person name="Tsui L.-C."/>
        </authorList>
    </citation>
    <scope>NUCLEOTIDE SEQUENCE [LARGE SCALE GENOMIC DNA]</scope>
</reference>
<reference key="5">
    <citation type="journal article" date="2004" name="Genome Res.">
        <title>The status, quality, and expansion of the NIH full-length cDNA project: the Mammalian Gene Collection (MGC).</title>
        <authorList>
            <consortium name="The MGC Project Team"/>
        </authorList>
    </citation>
    <scope>NUCLEOTIDE SEQUENCE [LARGE SCALE MRNA] OF 79-363 (ISOFORM 1)</scope>
    <source>
        <tissue>Kidney</tissue>
    </source>
</reference>
<reference key="6">
    <citation type="journal article" date="2002" name="Proc. Natl. Acad. Sci. U.S.A.">
        <title>A unique molecular chaperone Cosmc required for activity of the mammalian core 1 beta 3-galactosyltransferase.</title>
        <authorList>
            <person name="Ju T."/>
            <person name="Cummings R.D."/>
        </authorList>
    </citation>
    <scope>INTERACTION WITH C1GALT1C1</scope>
</reference>
<reference key="7">
    <citation type="journal article" date="2022" name="Nat. Commun.">
        <title>Structural basis for the synthesis of the core 1 structure by C1GalT1.</title>
        <authorList>
            <person name="Gonzalez-Ramirez A.M."/>
            <person name="Grosso A.S."/>
            <person name="Yang Z."/>
            <person name="Companon I."/>
            <person name="Coelho H."/>
            <person name="Narimatsu Y."/>
            <person name="Clausen H."/>
            <person name="Marcelo F."/>
            <person name="Corzana F."/>
            <person name="Hurtado-Guerrero R."/>
        </authorList>
    </citation>
    <scope>MUTAGENESIS OF ARG-140; TYR-201; TYR-206; ASP-240; TRP-285 AND TYR-310</scope>
</reference>
<reference key="8">
    <citation type="journal article" date="2007" name="Kidney Int.">
        <title>Variants of C1GALT1 gene are associated with the genetic susceptibility to IgA nephropathy.</title>
        <authorList>
            <person name="Li G.-S."/>
            <person name="Zhang H."/>
            <person name="Lv J.-C."/>
            <person name="Shen Y."/>
            <person name="Wang H.-Y."/>
        </authorList>
    </citation>
    <scope>INVOLVEMENT IN IGA NEPHROPATHY</scope>
</reference>
<reference key="9">
    <citation type="journal article" date="2009" name="Kidney Int.">
        <title>Interaction between variants of two glycosyltransferase genes in IgA nephropathy.</title>
        <authorList>
            <person name="Zhu L."/>
            <person name="Tang W."/>
            <person name="Li G."/>
            <person name="Lv J."/>
            <person name="Ding J."/>
            <person name="Yu L."/>
            <person name="Zhao M."/>
            <person name="Li Y."/>
            <person name="Zhang X."/>
            <person name="Shen Y."/>
            <person name="Zhang H."/>
            <person name="Wang H."/>
        </authorList>
    </citation>
    <scope>INVOLVEMENT IN IGA NEPHROPATHY</scope>
</reference>
<organism>
    <name type="scientific">Homo sapiens</name>
    <name type="common">Human</name>
    <dbReference type="NCBI Taxonomy" id="9606"/>
    <lineage>
        <taxon>Eukaryota</taxon>
        <taxon>Metazoa</taxon>
        <taxon>Chordata</taxon>
        <taxon>Craniata</taxon>
        <taxon>Vertebrata</taxon>
        <taxon>Euteleostomi</taxon>
        <taxon>Mammalia</taxon>
        <taxon>Eutheria</taxon>
        <taxon>Euarchontoglires</taxon>
        <taxon>Primates</taxon>
        <taxon>Haplorrhini</taxon>
        <taxon>Catarrhini</taxon>
        <taxon>Hominidae</taxon>
        <taxon>Homo</taxon>
    </lineage>
</organism>
<dbReference type="EC" id="2.4.1.122" evidence="6"/>
<dbReference type="EMBL" id="AF155582">
    <property type="protein sequence ID" value="AAF81981.1"/>
    <property type="molecule type" value="mRNA"/>
</dbReference>
<dbReference type="EMBL" id="AJ132443">
    <property type="protein sequence ID" value="CAC45046.1"/>
    <property type="molecule type" value="mRNA"/>
</dbReference>
<dbReference type="EMBL" id="AJ278960">
    <property type="protein sequence ID" value="CAC82373.1"/>
    <property type="molecule type" value="mRNA"/>
</dbReference>
<dbReference type="EMBL" id="AJ243256">
    <property type="protein sequence ID" value="CAC80435.1"/>
    <property type="molecule type" value="mRNA"/>
</dbReference>
<dbReference type="EMBL" id="AC005532">
    <property type="protein sequence ID" value="AAQ96887.1"/>
    <property type="molecule type" value="Genomic_DNA"/>
</dbReference>
<dbReference type="EMBL" id="CH236948">
    <property type="protein sequence ID" value="EAL24308.1"/>
    <property type="molecule type" value="Genomic_DNA"/>
</dbReference>
<dbReference type="EMBL" id="BC003174">
    <property type="protein sequence ID" value="AAH03174.1"/>
    <property type="molecule type" value="mRNA"/>
</dbReference>
<dbReference type="CCDS" id="CCDS5355.1">
    <molecule id="Q9NS00-1"/>
</dbReference>
<dbReference type="RefSeq" id="NP_064541.1">
    <molecule id="Q9NS00-1"/>
    <property type="nucleotide sequence ID" value="NM_020156.5"/>
</dbReference>
<dbReference type="RefSeq" id="XP_011513755.1">
    <property type="nucleotide sequence ID" value="XM_011515453.2"/>
</dbReference>
<dbReference type="RefSeq" id="XP_011513757.1">
    <property type="nucleotide sequence ID" value="XM_011515455.2"/>
</dbReference>
<dbReference type="RefSeq" id="XP_011513758.1">
    <molecule id="Q9NS00-1"/>
    <property type="nucleotide sequence ID" value="XM_011515456.3"/>
</dbReference>
<dbReference type="RefSeq" id="XP_016867931.1">
    <molecule id="Q9NS00-1"/>
    <property type="nucleotide sequence ID" value="XM_017012442.2"/>
</dbReference>
<dbReference type="RefSeq" id="XP_016867932.1">
    <property type="nucleotide sequence ID" value="XM_017012443.1"/>
</dbReference>
<dbReference type="RefSeq" id="XP_016867933.1">
    <molecule id="Q9NS00-1"/>
    <property type="nucleotide sequence ID" value="XM_017012444.2"/>
</dbReference>
<dbReference type="RefSeq" id="XP_016867934.1">
    <molecule id="Q9NS00-1"/>
    <property type="nucleotide sequence ID" value="XM_017012445.2"/>
</dbReference>
<dbReference type="RefSeq" id="XP_016867935.1">
    <property type="nucleotide sequence ID" value="XM_017012446.1"/>
</dbReference>
<dbReference type="RefSeq" id="XP_016867936.1">
    <property type="nucleotide sequence ID" value="XM_017012447.1"/>
</dbReference>
<dbReference type="RefSeq" id="XP_016867937.1">
    <molecule id="Q9NS00-1"/>
    <property type="nucleotide sequence ID" value="XM_017012448.1"/>
</dbReference>
<dbReference type="RefSeq" id="XP_024302606.1">
    <molecule id="Q9NS00-1"/>
    <property type="nucleotide sequence ID" value="XM_024446838.2"/>
</dbReference>
<dbReference type="RefSeq" id="XP_047276573.1">
    <molecule id="Q9NS00-1"/>
    <property type="nucleotide sequence ID" value="XM_047420617.1"/>
</dbReference>
<dbReference type="RefSeq" id="XP_047276574.1">
    <molecule id="Q9NS00-1"/>
    <property type="nucleotide sequence ID" value="XM_047420618.1"/>
</dbReference>
<dbReference type="RefSeq" id="XP_047276575.1">
    <molecule id="Q9NS00-1"/>
    <property type="nucleotide sequence ID" value="XM_047420619.1"/>
</dbReference>
<dbReference type="RefSeq" id="XP_047276576.1">
    <molecule id="Q9NS00-1"/>
    <property type="nucleotide sequence ID" value="XM_047420620.1"/>
</dbReference>
<dbReference type="RefSeq" id="XP_047276577.1">
    <molecule id="Q9NS00-1"/>
    <property type="nucleotide sequence ID" value="XM_047420621.1"/>
</dbReference>
<dbReference type="RefSeq" id="XP_047276578.1">
    <molecule id="Q9NS00-1"/>
    <property type="nucleotide sequence ID" value="XM_047420622.1"/>
</dbReference>
<dbReference type="RefSeq" id="XP_047276579.1">
    <molecule id="Q9NS00-1"/>
    <property type="nucleotide sequence ID" value="XM_047420623.1"/>
</dbReference>
<dbReference type="RefSeq" id="XP_054214635.1">
    <molecule id="Q9NS00-1"/>
    <property type="nucleotide sequence ID" value="XM_054358660.1"/>
</dbReference>
<dbReference type="RefSeq" id="XP_054214636.1">
    <molecule id="Q9NS00-1"/>
    <property type="nucleotide sequence ID" value="XM_054358661.1"/>
</dbReference>
<dbReference type="RefSeq" id="XP_054214637.1">
    <molecule id="Q9NS00-1"/>
    <property type="nucleotide sequence ID" value="XM_054358662.1"/>
</dbReference>
<dbReference type="RefSeq" id="XP_054214638.1">
    <molecule id="Q9NS00-1"/>
    <property type="nucleotide sequence ID" value="XM_054358663.1"/>
</dbReference>
<dbReference type="RefSeq" id="XP_054214639.1">
    <molecule id="Q9NS00-1"/>
    <property type="nucleotide sequence ID" value="XM_054358664.1"/>
</dbReference>
<dbReference type="RefSeq" id="XP_054214640.1">
    <molecule id="Q9NS00-1"/>
    <property type="nucleotide sequence ID" value="XM_054358665.1"/>
</dbReference>
<dbReference type="RefSeq" id="XP_054214641.1">
    <molecule id="Q9NS00-1"/>
    <property type="nucleotide sequence ID" value="XM_054358666.1"/>
</dbReference>
<dbReference type="RefSeq" id="XP_054214642.1">
    <molecule id="Q9NS00-1"/>
    <property type="nucleotide sequence ID" value="XM_054358667.1"/>
</dbReference>
<dbReference type="RefSeq" id="XP_054214643.1">
    <molecule id="Q9NS00-1"/>
    <property type="nucleotide sequence ID" value="XM_054358668.1"/>
</dbReference>
<dbReference type="RefSeq" id="XP_054214644.1">
    <molecule id="Q9NS00-1"/>
    <property type="nucleotide sequence ID" value="XM_054358669.1"/>
</dbReference>
<dbReference type="RefSeq" id="XP_054214645.1">
    <molecule id="Q9NS00-1"/>
    <property type="nucleotide sequence ID" value="XM_054358670.1"/>
</dbReference>
<dbReference type="SMR" id="Q9NS00"/>
<dbReference type="BioGRID" id="121241">
    <property type="interactions" value="53"/>
</dbReference>
<dbReference type="FunCoup" id="Q9NS00">
    <property type="interactions" value="783"/>
</dbReference>
<dbReference type="IntAct" id="Q9NS00">
    <property type="interactions" value="16"/>
</dbReference>
<dbReference type="MINT" id="Q9NS00"/>
<dbReference type="STRING" id="9606.ENSP00000389176"/>
<dbReference type="ChEMBL" id="CHEMBL2321633"/>
<dbReference type="CAZy" id="GT31">
    <property type="family name" value="Glycosyltransferase Family 31"/>
</dbReference>
<dbReference type="iPTMnet" id="Q9NS00"/>
<dbReference type="PhosphoSitePlus" id="Q9NS00"/>
<dbReference type="BioMuta" id="C1GALT1"/>
<dbReference type="DMDM" id="74719147"/>
<dbReference type="jPOST" id="Q9NS00"/>
<dbReference type="MassIVE" id="Q9NS00"/>
<dbReference type="PaxDb" id="9606-ENSP00000389176"/>
<dbReference type="PeptideAtlas" id="Q9NS00"/>
<dbReference type="ProteomicsDB" id="82459">
    <molecule id="Q9NS00-1"/>
</dbReference>
<dbReference type="ProteomicsDB" id="82460">
    <molecule id="Q9NS00-2"/>
</dbReference>
<dbReference type="Pumba" id="Q9NS00"/>
<dbReference type="Antibodypedia" id="2308">
    <property type="antibodies" value="137 antibodies from 26 providers"/>
</dbReference>
<dbReference type="DNASU" id="56913"/>
<dbReference type="Ensembl" id="ENST00000223122.4">
    <molecule id="Q9NS00-1"/>
    <property type="protein sequence ID" value="ENSP00000223122.2"/>
    <property type="gene ID" value="ENSG00000106392.11"/>
</dbReference>
<dbReference type="Ensembl" id="ENST00000402468.3">
    <molecule id="Q9NS00-2"/>
    <property type="protein sequence ID" value="ENSP00000384550.3"/>
    <property type="gene ID" value="ENSG00000106392.11"/>
</dbReference>
<dbReference type="Ensembl" id="ENST00000436587.7">
    <molecule id="Q9NS00-1"/>
    <property type="protein sequence ID" value="ENSP00000389176.2"/>
    <property type="gene ID" value="ENSG00000106392.11"/>
</dbReference>
<dbReference type="GeneID" id="56913"/>
<dbReference type="KEGG" id="hsa:56913"/>
<dbReference type="MANE-Select" id="ENST00000436587.7">
    <property type="protein sequence ID" value="ENSP00000389176.2"/>
    <property type="RefSeq nucleotide sequence ID" value="NM_020156.5"/>
    <property type="RefSeq protein sequence ID" value="NP_064541.1"/>
</dbReference>
<dbReference type="UCSC" id="uc003sra.5">
    <molecule id="Q9NS00-1"/>
    <property type="organism name" value="human"/>
</dbReference>
<dbReference type="AGR" id="HGNC:24337"/>
<dbReference type="CTD" id="56913"/>
<dbReference type="DisGeNET" id="56913"/>
<dbReference type="GeneCards" id="C1GALT1"/>
<dbReference type="HGNC" id="HGNC:24337">
    <property type="gene designation" value="C1GALT1"/>
</dbReference>
<dbReference type="HPA" id="ENSG00000106392">
    <property type="expression patterns" value="Low tissue specificity"/>
</dbReference>
<dbReference type="MIM" id="610555">
    <property type="type" value="gene"/>
</dbReference>
<dbReference type="neXtProt" id="NX_Q9NS00"/>
<dbReference type="OpenTargets" id="ENSG00000106392"/>
<dbReference type="PharmGKB" id="PA134971259"/>
<dbReference type="VEuPathDB" id="HostDB:ENSG00000106392"/>
<dbReference type="eggNOG" id="KOG2246">
    <property type="taxonomic scope" value="Eukaryota"/>
</dbReference>
<dbReference type="GeneTree" id="ENSGT00940000155000"/>
<dbReference type="HOGENOM" id="CLU_035857_0_0_1"/>
<dbReference type="InParanoid" id="Q9NS00"/>
<dbReference type="OMA" id="WLLSKHD"/>
<dbReference type="OrthoDB" id="414175at2759"/>
<dbReference type="PAN-GO" id="Q9NS00">
    <property type="GO annotations" value="2 GO annotations based on evolutionary models"/>
</dbReference>
<dbReference type="PhylomeDB" id="Q9NS00"/>
<dbReference type="TreeFam" id="TF317293"/>
<dbReference type="BioCyc" id="MetaCyc:HS02901-MONOMER"/>
<dbReference type="BRENDA" id="2.4.1.122">
    <property type="organism ID" value="2681"/>
</dbReference>
<dbReference type="PathwayCommons" id="Q9NS00"/>
<dbReference type="Reactome" id="R-HSA-5083632">
    <property type="pathway name" value="Defective C1GALT1C1 causes TNPS"/>
</dbReference>
<dbReference type="Reactome" id="R-HSA-913709">
    <property type="pathway name" value="O-linked glycosylation of mucins"/>
</dbReference>
<dbReference type="SignaLink" id="Q9NS00"/>
<dbReference type="UniPathway" id="UPA00378"/>
<dbReference type="BioGRID-ORCS" id="56913">
    <property type="hits" value="19 hits in 1123 CRISPR screens"/>
</dbReference>
<dbReference type="ChiTaRS" id="C1GALT1">
    <property type="organism name" value="human"/>
</dbReference>
<dbReference type="GenomeRNAi" id="56913"/>
<dbReference type="Pharos" id="Q9NS00">
    <property type="development level" value="Tbio"/>
</dbReference>
<dbReference type="PRO" id="PR:Q9NS00"/>
<dbReference type="Proteomes" id="UP000005640">
    <property type="component" value="Chromosome 7"/>
</dbReference>
<dbReference type="RNAct" id="Q9NS00">
    <property type="molecule type" value="protein"/>
</dbReference>
<dbReference type="Bgee" id="ENSG00000106392">
    <property type="expression patterns" value="Expressed in amniotic fluid and 189 other cell types or tissues"/>
</dbReference>
<dbReference type="ExpressionAtlas" id="Q9NS00">
    <property type="expression patterns" value="baseline and differential"/>
</dbReference>
<dbReference type="GO" id="GO:0000139">
    <property type="term" value="C:Golgi membrane"/>
    <property type="evidence" value="ECO:0000304"/>
    <property type="project" value="Reactome"/>
</dbReference>
<dbReference type="GO" id="GO:0016020">
    <property type="term" value="C:membrane"/>
    <property type="evidence" value="ECO:0000314"/>
    <property type="project" value="UniProtKB"/>
</dbReference>
<dbReference type="GO" id="GO:0016263">
    <property type="term" value="F:glycoprotein-N-acetylgalactosamine 3-beta-galactosyltransferase activity"/>
    <property type="evidence" value="ECO:0000314"/>
    <property type="project" value="UniProtKB"/>
</dbReference>
<dbReference type="GO" id="GO:0046872">
    <property type="term" value="F:metal ion binding"/>
    <property type="evidence" value="ECO:0007669"/>
    <property type="project" value="UniProtKB-KW"/>
</dbReference>
<dbReference type="GO" id="GO:0000166">
    <property type="term" value="F:nucleotide binding"/>
    <property type="evidence" value="ECO:0007669"/>
    <property type="project" value="UniProtKB-KW"/>
</dbReference>
<dbReference type="GO" id="GO:0001525">
    <property type="term" value="P:angiogenesis"/>
    <property type="evidence" value="ECO:0000315"/>
    <property type="project" value="UniProtKB"/>
</dbReference>
<dbReference type="GO" id="GO:0060576">
    <property type="term" value="P:intestinal epithelial cell development"/>
    <property type="evidence" value="ECO:0007669"/>
    <property type="project" value="Ensembl"/>
</dbReference>
<dbReference type="GO" id="GO:0001822">
    <property type="term" value="P:kidney development"/>
    <property type="evidence" value="ECO:0000315"/>
    <property type="project" value="UniProtKB"/>
</dbReference>
<dbReference type="GO" id="GO:0006493">
    <property type="term" value="P:protein O-linked glycosylation"/>
    <property type="evidence" value="ECO:0007669"/>
    <property type="project" value="Ensembl"/>
</dbReference>
<dbReference type="FunFam" id="3.90.550.50:FF:000007">
    <property type="entry name" value="Glycoprotein-N-acetylgalactosamine 3-beta-galactosyltransferase 1"/>
    <property type="match status" value="1"/>
</dbReference>
<dbReference type="Gene3D" id="3.90.550.50">
    <property type="match status" value="1"/>
</dbReference>
<dbReference type="InterPro" id="IPR026050">
    <property type="entry name" value="C1GALT1/C1GALT1_chp1"/>
</dbReference>
<dbReference type="InterPro" id="IPR003378">
    <property type="entry name" value="Fringe-like_glycosylTrfase"/>
</dbReference>
<dbReference type="PANTHER" id="PTHR23033">
    <property type="entry name" value="BETA1,3-GALACTOSYLTRANSFERASE"/>
    <property type="match status" value="1"/>
</dbReference>
<dbReference type="PANTHER" id="PTHR23033:SF13">
    <property type="entry name" value="GLYCOPROTEIN-N-ACETYLGALACTOSAMINE 3-BETA-GALACTOSYLTRANSFERASE 1"/>
    <property type="match status" value="1"/>
</dbReference>
<dbReference type="Pfam" id="PF02434">
    <property type="entry name" value="Fringe"/>
    <property type="match status" value="1"/>
</dbReference>
<gene>
    <name type="primary">C1GALT1</name>
</gene>
<sequence length="363" mass="42203">MASKSWLNFLTFLCGSAIGFLLCSQLFSILLGEKVDTQPNVLHNDPHARHSDDNGQNHLEGQMNFNADSSQHKDENTDIAENLYQKVRILCWVMTGPQNLEKKAKHVKATWAQRCNKVLFMSSEENKDFPAVGLKTKEGRDQLYWKTIKAFQYVHEHYLEDADWFLKADDDTYVILDNLRWLLSKYDPEEPIYFGRRFKPYVKQGYMSGGAGYVLSKEALKRFVDAFKTDKCTHSSSIEDLALGRCMEIMNVEAGDSRDTIGKETFHPFVPEHHLIKGYLPRTFWYWNYNYYPPVEGPGCCSDLAVSFHYVDSTTMYELEYLVYHLRPYGYLYRYQPTLPERILKEISQANKNEDTKVKLGNP</sequence>
<feature type="chain" id="PRO_0000285064" description="Glycoprotein-N-acetylgalactosamine 3-beta-galactosyltransferase 1">
    <location>
        <begin position="1"/>
        <end position="363"/>
    </location>
</feature>
<feature type="topological domain" description="Cytoplasmic" evidence="4">
    <location>
        <begin position="1"/>
        <end position="6"/>
    </location>
</feature>
<feature type="transmembrane region" description="Helical; Signal-anchor for type II membrane protein" evidence="4">
    <location>
        <begin position="7"/>
        <end position="29"/>
    </location>
</feature>
<feature type="topological domain" description="Lumenal" evidence="4">
    <location>
        <begin position="30"/>
        <end position="363"/>
    </location>
</feature>
<feature type="region of interest" description="Disordered" evidence="5">
    <location>
        <begin position="41"/>
        <end position="72"/>
    </location>
</feature>
<feature type="compositionally biased region" description="Basic and acidic residues" evidence="5">
    <location>
        <begin position="44"/>
        <end position="55"/>
    </location>
</feature>
<feature type="compositionally biased region" description="Polar residues" evidence="5">
    <location>
        <begin position="56"/>
        <end position="69"/>
    </location>
</feature>
<feature type="binding site" evidence="1">
    <location>
        <position position="94"/>
    </location>
    <ligand>
        <name>UDP</name>
        <dbReference type="ChEBI" id="CHEBI:58223"/>
    </ligand>
</feature>
<feature type="binding site" evidence="1">
    <location>
        <position position="138"/>
    </location>
    <ligand>
        <name>UDP</name>
        <dbReference type="ChEBI" id="CHEBI:58223"/>
    </ligand>
</feature>
<feature type="binding site" evidence="1">
    <location>
        <position position="139"/>
    </location>
    <ligand>
        <name>UDP</name>
        <dbReference type="ChEBI" id="CHEBI:58223"/>
    </ligand>
</feature>
<feature type="binding site" evidence="1">
    <location>
        <position position="140"/>
    </location>
    <ligand>
        <name>UDP</name>
        <dbReference type="ChEBI" id="CHEBI:58223"/>
    </ligand>
</feature>
<feature type="binding site" evidence="1">
    <location>
        <position position="146"/>
    </location>
    <ligand>
        <name>UDP</name>
        <dbReference type="ChEBI" id="CHEBI:58223"/>
    </ligand>
</feature>
<feature type="binding site" evidence="1">
    <location>
        <position position="169"/>
    </location>
    <ligand>
        <name>Mn(2+)</name>
        <dbReference type="ChEBI" id="CHEBI:29035"/>
    </ligand>
</feature>
<feature type="binding site" evidence="1">
    <location>
        <position position="169"/>
    </location>
    <ligand>
        <name>UDP</name>
        <dbReference type="ChEBI" id="CHEBI:58223"/>
    </ligand>
</feature>
<feature type="binding site" evidence="1">
    <location>
        <position position="171"/>
    </location>
    <ligand>
        <name>Mn(2+)</name>
        <dbReference type="ChEBI" id="CHEBI:29035"/>
    </ligand>
</feature>
<feature type="binding site" evidence="1">
    <location>
        <position position="285"/>
    </location>
    <ligand>
        <name>a glycoprotein</name>
        <dbReference type="ChEBI" id="CHEBI:17089"/>
    </ligand>
</feature>
<feature type="binding site" evidence="1">
    <location>
        <position position="309"/>
    </location>
    <ligand>
        <name>Mn(2+)</name>
        <dbReference type="ChEBI" id="CHEBI:29035"/>
    </ligand>
</feature>
<feature type="binding site" evidence="1">
    <location>
        <position position="309"/>
    </location>
    <ligand>
        <name>UDP</name>
        <dbReference type="ChEBI" id="CHEBI:58223"/>
    </ligand>
</feature>
<feature type="binding site" evidence="1">
    <location>
        <position position="310"/>
    </location>
    <ligand>
        <name>UDP</name>
        <dbReference type="ChEBI" id="CHEBI:58223"/>
    </ligand>
</feature>
<feature type="modified residue" description="Phosphoserine" evidence="3">
    <location>
        <position position="235"/>
    </location>
</feature>
<feature type="disulfide bond" evidence="1">
    <location>
        <begin position="91"/>
        <end position="115"/>
    </location>
</feature>
<feature type="disulfide bond" evidence="1">
    <location>
        <begin position="232"/>
        <end position="246"/>
    </location>
</feature>
<feature type="disulfide bond" evidence="1">
    <location>
        <begin position="300"/>
        <end position="301"/>
    </location>
</feature>
<feature type="splice variant" id="VSP_024809" description="In isoform 2." evidence="9">
    <original>GPGCCSDLAVSFHYVDSTTMYELEYLVYHLRPYGYLYRYQPTLPERILKEISQANKNEDTKVKLGNP</original>
    <variation>VSLEILLLCQYLD</variation>
    <location>
        <begin position="297"/>
        <end position="363"/>
    </location>
</feature>
<feature type="mutagenesis site" description="Reduced activity." evidence="8">
    <original>R</original>
    <variation>A</variation>
    <location>
        <position position="140"/>
    </location>
</feature>
<feature type="mutagenesis site" description="Reduced activity." evidence="8">
    <original>Y</original>
    <variation>A</variation>
    <location>
        <position position="201"/>
    </location>
</feature>
<feature type="mutagenesis site" description="Reduced activity." evidence="8">
    <original>Y</original>
    <variation>A</variation>
    <location>
        <position position="206"/>
    </location>
</feature>
<feature type="mutagenesis site" description="Inactive." evidence="8">
    <original>D</original>
    <variation>A</variation>
    <location>
        <position position="240"/>
    </location>
</feature>
<feature type="mutagenesis site" description="Inactive." evidence="8">
    <original>W</original>
    <variation>A</variation>
    <location>
        <position position="285"/>
    </location>
</feature>
<feature type="mutagenesis site" description="Reduced activity." evidence="8">
    <original>Y</original>
    <variation>A</variation>
    <location>
        <position position="310"/>
    </location>
</feature>
<evidence type="ECO:0000250" key="1">
    <source>
        <dbReference type="UniProtKB" id="Q7K237"/>
    </source>
</evidence>
<evidence type="ECO:0000250" key="2">
    <source>
        <dbReference type="UniProtKB" id="Q9JJ05"/>
    </source>
</evidence>
<evidence type="ECO:0000250" key="3">
    <source>
        <dbReference type="UniProtKB" id="Q9JJ06"/>
    </source>
</evidence>
<evidence type="ECO:0000255" key="4"/>
<evidence type="ECO:0000256" key="5">
    <source>
        <dbReference type="SAM" id="MobiDB-lite"/>
    </source>
</evidence>
<evidence type="ECO:0000269" key="6">
    <source>
    </source>
</evidence>
<evidence type="ECO:0000269" key="7">
    <source>
    </source>
</evidence>
<evidence type="ECO:0000269" key="8">
    <source>
    </source>
</evidence>
<evidence type="ECO:0000303" key="9">
    <source ref="2"/>
</evidence>
<evidence type="ECO:0000305" key="10"/>
<accession>Q9NS00</accession>
<accession>Q96QH4</accession>
<accession>Q9BTU1</accession>
<comment type="function">
    <text evidence="1 3 6">Glycosyltransferase that generates the core 1 O-glycan Gal-beta1-3GalNAc-alpha1-Ser/Thr (T antigen), which is a precursor for many extended O-glycans in glycoproteins (PubMed:11677243). Plays a central role in many processes, such as angiogenesis, thrombopoiesis and kidney homeostasis development (By similarity).</text>
</comment>
<comment type="catalytic activity">
    <reaction evidence="6">
        <text>an N-acetyl-alpha-D-galactosaminyl derivative + UDP-alpha-D-galactose = a beta-D-galactosyl-(1-&gt;3)-N-acetyl-alpha-D-galactosaminyl derivative + UDP + H(+)</text>
        <dbReference type="Rhea" id="RHEA:15621"/>
        <dbReference type="ChEBI" id="CHEBI:15378"/>
        <dbReference type="ChEBI" id="CHEBI:28257"/>
        <dbReference type="ChEBI" id="CHEBI:58223"/>
        <dbReference type="ChEBI" id="CHEBI:66914"/>
        <dbReference type="ChEBI" id="CHEBI:133470"/>
        <dbReference type="EC" id="2.4.1.122"/>
    </reaction>
</comment>
<comment type="catalytic activity">
    <reaction evidence="1">
        <text>a 3-O-[N-acetyl-alpha-D-galactosaminyl]-L-threonyl-[protein] + UDP-alpha-D-galactose = a 3-O-[beta-D-galactosyl-(1-&gt;3)-N-acetyl-alpha-D-galactosaminyl]-L-threonyl-[protein] + UDP + H(+)</text>
        <dbReference type="Rhea" id="RHEA:56196"/>
        <dbReference type="Rhea" id="RHEA-COMP:11689"/>
        <dbReference type="Rhea" id="RHEA-COMP:13923"/>
        <dbReference type="ChEBI" id="CHEBI:15378"/>
        <dbReference type="ChEBI" id="CHEBI:58223"/>
        <dbReference type="ChEBI" id="CHEBI:66914"/>
        <dbReference type="ChEBI" id="CHEBI:87075"/>
        <dbReference type="ChEBI" id="CHEBI:137950"/>
    </reaction>
    <physiologicalReaction direction="left-to-right" evidence="1">
        <dbReference type="Rhea" id="RHEA:56197"/>
    </physiologicalReaction>
</comment>
<comment type="catalytic activity">
    <reaction evidence="1">
        <text>a 3-O-[N-acetyl-alpha-D-galactosaminyl]-L-seryl-[protein] + UDP-alpha-D-galactose = a 3-O-[beta-D-galactosyl-(1-&gt;3)-N-acetyl-alpha-D-galactosaminyl]-L-seryl-[protein] + UDP + H(+)</text>
        <dbReference type="Rhea" id="RHEA:56200"/>
        <dbReference type="Rhea" id="RHEA-COMP:12788"/>
        <dbReference type="Rhea" id="RHEA-COMP:13922"/>
        <dbReference type="ChEBI" id="CHEBI:15378"/>
        <dbReference type="ChEBI" id="CHEBI:53604"/>
        <dbReference type="ChEBI" id="CHEBI:58223"/>
        <dbReference type="ChEBI" id="CHEBI:66914"/>
        <dbReference type="ChEBI" id="CHEBI:137949"/>
    </reaction>
    <physiologicalReaction direction="left-to-right" evidence="1">
        <dbReference type="Rhea" id="RHEA:56201"/>
    </physiologicalReaction>
</comment>
<comment type="cofactor">
    <cofactor evidence="2">
        <name>Mn(2+)</name>
        <dbReference type="ChEBI" id="CHEBI:29035"/>
    </cofactor>
</comment>
<comment type="pathway">
    <text evidence="6">Protein modification; protein glycosylation.</text>
</comment>
<comment type="subunit">
    <text evidence="2 7">Homodimer; disulfide-linked (By similarity). Interacts with the C1GALT1C1 chaperone; required for galactosyltransferase activity (PubMed:12464682).</text>
</comment>
<comment type="interaction">
    <interactant intactId="EBI-8628584">
        <id>Q9NS00</id>
    </interactant>
    <interactant intactId="EBI-2837343">
        <id>Q96EU7</id>
        <label>C1GALT1C1</label>
    </interactant>
    <organismsDiffer>false</organismsDiffer>
    <experiments>4</experiments>
</comment>
<comment type="subcellular location">
    <subcellularLocation>
        <location evidence="2">Membrane</location>
        <topology evidence="4">Single-pass type II membrane protein</topology>
    </subcellularLocation>
</comment>
<comment type="alternative products">
    <event type="alternative splicing"/>
    <isoform>
        <id>Q9NS00-1</id>
        <name>1</name>
        <sequence type="displayed"/>
    </isoform>
    <isoform>
        <id>Q9NS00-2</id>
        <name>2</name>
        <sequence type="described" ref="VSP_024809"/>
    </isoform>
</comment>
<comment type="tissue specificity">
    <text evidence="6">Widely expressed. Highly expressed in kidney, heart, placenta and liver.</text>
</comment>
<comment type="miscellaneous">
    <text>Aberrant O-galactosylation of IgA1 molecules plays a role in the development and progression of IgA nephropathy (IgAN). Genetic interactions of C1GALT1 and ST6GALNAC2 variants influence IgA1 O-glycosylation, disease predisposition, and disease severity, and may contribute to the polygenic nature of IgAN.</text>
</comment>
<comment type="similarity">
    <text evidence="10">Belongs to the glycosyltransferase 31 family. Beta3-Gal-T subfamily.</text>
</comment>
<comment type="online information" name="Functional Glycomics Gateway - GTase">
    <link uri="http://www.functionalglycomics.org/glycomics/molecule/jsp/glycoEnzyme/viewGlycoEnzyme.jsp?gbpId=gt_hum_447"/>
    <text>Core1 UDP-galactose:N-acetylgalactosamine-alpha-R beta 1,3-galactosyltransferase</text>
</comment>
<proteinExistence type="evidence at protein level"/>
<keyword id="KW-0025">Alternative splicing</keyword>
<keyword id="KW-0037">Angiogenesis</keyword>
<keyword id="KW-0217">Developmental protein</keyword>
<keyword id="KW-0221">Differentiation</keyword>
<keyword id="KW-1015">Disulfide bond</keyword>
<keyword id="KW-0328">Glycosyltransferase</keyword>
<keyword id="KW-0464">Manganese</keyword>
<keyword id="KW-0472">Membrane</keyword>
<keyword id="KW-0479">Metal-binding</keyword>
<keyword id="KW-0547">Nucleotide-binding</keyword>
<keyword id="KW-0597">Phosphoprotein</keyword>
<keyword id="KW-1267">Proteomics identification</keyword>
<keyword id="KW-1185">Reference proteome</keyword>
<keyword id="KW-0735">Signal-anchor</keyword>
<keyword id="KW-0808">Transferase</keyword>
<keyword id="KW-0812">Transmembrane</keyword>
<keyword id="KW-1133">Transmembrane helix</keyword>